<accession>Q2A2J2</accession>
<sequence length="65" mass="7370">MPKLKTKSGAAKRFKKTGKGGFKHRCANRAHINTKMTTKRKRHLRGMNQVAKVDTTSLVQQMPYA</sequence>
<organism>
    <name type="scientific">Francisella tularensis subsp. holarctica (strain LVS)</name>
    <dbReference type="NCBI Taxonomy" id="376619"/>
    <lineage>
        <taxon>Bacteria</taxon>
        <taxon>Pseudomonadati</taxon>
        <taxon>Pseudomonadota</taxon>
        <taxon>Gammaproteobacteria</taxon>
        <taxon>Thiotrichales</taxon>
        <taxon>Francisellaceae</taxon>
        <taxon>Francisella</taxon>
    </lineage>
</organism>
<proteinExistence type="inferred from homology"/>
<protein>
    <recommendedName>
        <fullName evidence="1">Large ribosomal subunit protein bL35</fullName>
    </recommendedName>
    <alternativeName>
        <fullName evidence="3">50S ribosomal protein L35</fullName>
    </alternativeName>
</protein>
<comment type="similarity">
    <text evidence="1">Belongs to the bacterial ribosomal protein bL35 family.</text>
</comment>
<evidence type="ECO:0000255" key="1">
    <source>
        <dbReference type="HAMAP-Rule" id="MF_00514"/>
    </source>
</evidence>
<evidence type="ECO:0000256" key="2">
    <source>
        <dbReference type="SAM" id="MobiDB-lite"/>
    </source>
</evidence>
<evidence type="ECO:0000305" key="3"/>
<gene>
    <name evidence="1" type="primary">rpmI</name>
    <name type="ordered locus">FTL_1405</name>
</gene>
<feature type="chain" id="PRO_0000258680" description="Large ribosomal subunit protein bL35">
    <location>
        <begin position="1"/>
        <end position="65"/>
    </location>
</feature>
<feature type="region of interest" description="Disordered" evidence="2">
    <location>
        <begin position="1"/>
        <end position="23"/>
    </location>
</feature>
<feature type="region of interest" description="Disordered" evidence="2">
    <location>
        <begin position="36"/>
        <end position="65"/>
    </location>
</feature>
<feature type="compositionally biased region" description="Polar residues" evidence="2">
    <location>
        <begin position="54"/>
        <end position="65"/>
    </location>
</feature>
<reference key="1">
    <citation type="submission" date="2006-03" db="EMBL/GenBank/DDBJ databases">
        <title>Complete genome sequence of Francisella tularensis LVS (Live Vaccine Strain).</title>
        <authorList>
            <person name="Chain P."/>
            <person name="Larimer F."/>
            <person name="Land M."/>
            <person name="Stilwagen S."/>
            <person name="Larsson P."/>
            <person name="Bearden S."/>
            <person name="Chu M."/>
            <person name="Oyston P."/>
            <person name="Forsman M."/>
            <person name="Andersson S."/>
            <person name="Lindler L."/>
            <person name="Titball R."/>
            <person name="Garcia E."/>
        </authorList>
    </citation>
    <scope>NUCLEOTIDE SEQUENCE [LARGE SCALE GENOMIC DNA]</scope>
    <source>
        <strain>LVS</strain>
    </source>
</reference>
<keyword id="KW-1185">Reference proteome</keyword>
<keyword id="KW-0687">Ribonucleoprotein</keyword>
<keyword id="KW-0689">Ribosomal protein</keyword>
<name>RL35_FRATH</name>
<dbReference type="EMBL" id="AM233362">
    <property type="protein sequence ID" value="CAJ79844.1"/>
    <property type="molecule type" value="Genomic_DNA"/>
</dbReference>
<dbReference type="RefSeq" id="WP_003016672.1">
    <property type="nucleotide sequence ID" value="NZ_CP009694.1"/>
</dbReference>
<dbReference type="SMR" id="Q2A2J2"/>
<dbReference type="KEGG" id="ftl:FTL_1405"/>
<dbReference type="Proteomes" id="UP000001944">
    <property type="component" value="Chromosome"/>
</dbReference>
<dbReference type="GO" id="GO:0022625">
    <property type="term" value="C:cytosolic large ribosomal subunit"/>
    <property type="evidence" value="ECO:0007669"/>
    <property type="project" value="TreeGrafter"/>
</dbReference>
<dbReference type="GO" id="GO:0003735">
    <property type="term" value="F:structural constituent of ribosome"/>
    <property type="evidence" value="ECO:0007669"/>
    <property type="project" value="InterPro"/>
</dbReference>
<dbReference type="GO" id="GO:0006412">
    <property type="term" value="P:translation"/>
    <property type="evidence" value="ECO:0007669"/>
    <property type="project" value="UniProtKB-UniRule"/>
</dbReference>
<dbReference type="FunFam" id="4.10.410.60:FF:000001">
    <property type="entry name" value="50S ribosomal protein L35"/>
    <property type="match status" value="1"/>
</dbReference>
<dbReference type="Gene3D" id="4.10.410.60">
    <property type="match status" value="1"/>
</dbReference>
<dbReference type="HAMAP" id="MF_00514">
    <property type="entry name" value="Ribosomal_bL35"/>
    <property type="match status" value="1"/>
</dbReference>
<dbReference type="InterPro" id="IPR001706">
    <property type="entry name" value="Ribosomal_bL35"/>
</dbReference>
<dbReference type="InterPro" id="IPR021137">
    <property type="entry name" value="Ribosomal_bL35-like"/>
</dbReference>
<dbReference type="InterPro" id="IPR018265">
    <property type="entry name" value="Ribosomal_bL35_CS"/>
</dbReference>
<dbReference type="InterPro" id="IPR037229">
    <property type="entry name" value="Ribosomal_bL35_sf"/>
</dbReference>
<dbReference type="NCBIfam" id="TIGR00001">
    <property type="entry name" value="rpmI_bact"/>
    <property type="match status" value="1"/>
</dbReference>
<dbReference type="PANTHER" id="PTHR33343">
    <property type="entry name" value="54S RIBOSOMAL PROTEIN BL35M"/>
    <property type="match status" value="1"/>
</dbReference>
<dbReference type="PANTHER" id="PTHR33343:SF1">
    <property type="entry name" value="LARGE RIBOSOMAL SUBUNIT PROTEIN BL35M"/>
    <property type="match status" value="1"/>
</dbReference>
<dbReference type="Pfam" id="PF01632">
    <property type="entry name" value="Ribosomal_L35p"/>
    <property type="match status" value="1"/>
</dbReference>
<dbReference type="PRINTS" id="PR00064">
    <property type="entry name" value="RIBOSOMALL35"/>
</dbReference>
<dbReference type="SUPFAM" id="SSF143034">
    <property type="entry name" value="L35p-like"/>
    <property type="match status" value="1"/>
</dbReference>
<dbReference type="PROSITE" id="PS00936">
    <property type="entry name" value="RIBOSOMAL_L35"/>
    <property type="match status" value="1"/>
</dbReference>